<protein>
    <recommendedName>
        <fullName>AP-2 complex subunit sigma</fullName>
    </recommendedName>
    <alternativeName>
        <fullName>Adaptin small chain</fullName>
    </alternativeName>
    <alternativeName>
        <fullName>Clathrin assembly protein 2 sigma small chain</fullName>
    </alternativeName>
    <alternativeName>
        <fullName>Sigma2-adaptin</fullName>
    </alternativeName>
</protein>
<keyword id="KW-1003">Cell membrane</keyword>
<keyword id="KW-0168">Coated pit</keyword>
<keyword id="KW-0254">Endocytosis</keyword>
<keyword id="KW-0472">Membrane</keyword>
<keyword id="KW-0653">Protein transport</keyword>
<keyword id="KW-1185">Reference proteome</keyword>
<keyword id="KW-0813">Transport</keyword>
<reference key="1">
    <citation type="journal article" date="2003" name="Nature">
        <title>The genome sequence of the filamentous fungus Neurospora crassa.</title>
        <authorList>
            <person name="Galagan J.E."/>
            <person name="Calvo S.E."/>
            <person name="Borkovich K.A."/>
            <person name="Selker E.U."/>
            <person name="Read N.D."/>
            <person name="Jaffe D.B."/>
            <person name="FitzHugh W."/>
            <person name="Ma L.-J."/>
            <person name="Smirnov S."/>
            <person name="Purcell S."/>
            <person name="Rehman B."/>
            <person name="Elkins T."/>
            <person name="Engels R."/>
            <person name="Wang S."/>
            <person name="Nielsen C.B."/>
            <person name="Butler J."/>
            <person name="Endrizzi M."/>
            <person name="Qui D."/>
            <person name="Ianakiev P."/>
            <person name="Bell-Pedersen D."/>
            <person name="Nelson M.A."/>
            <person name="Werner-Washburne M."/>
            <person name="Selitrennikoff C.P."/>
            <person name="Kinsey J.A."/>
            <person name="Braun E.L."/>
            <person name="Zelter A."/>
            <person name="Schulte U."/>
            <person name="Kothe G.O."/>
            <person name="Jedd G."/>
            <person name="Mewes H.-W."/>
            <person name="Staben C."/>
            <person name="Marcotte E."/>
            <person name="Greenberg D."/>
            <person name="Roy A."/>
            <person name="Foley K."/>
            <person name="Naylor J."/>
            <person name="Stange-Thomann N."/>
            <person name="Barrett R."/>
            <person name="Gnerre S."/>
            <person name="Kamal M."/>
            <person name="Kamvysselis M."/>
            <person name="Mauceli E.W."/>
            <person name="Bielke C."/>
            <person name="Rudd S."/>
            <person name="Frishman D."/>
            <person name="Krystofova S."/>
            <person name="Rasmussen C."/>
            <person name="Metzenberg R.L."/>
            <person name="Perkins D.D."/>
            <person name="Kroken S."/>
            <person name="Cogoni C."/>
            <person name="Macino G."/>
            <person name="Catcheside D.E.A."/>
            <person name="Li W."/>
            <person name="Pratt R.J."/>
            <person name="Osmani S.A."/>
            <person name="DeSouza C.P.C."/>
            <person name="Glass N.L."/>
            <person name="Orbach M.J."/>
            <person name="Berglund J.A."/>
            <person name="Voelker R."/>
            <person name="Yarden O."/>
            <person name="Plamann M."/>
            <person name="Seiler S."/>
            <person name="Dunlap J.C."/>
            <person name="Radford A."/>
            <person name="Aramayo R."/>
            <person name="Natvig D.O."/>
            <person name="Alex L.A."/>
            <person name="Mannhaupt G."/>
            <person name="Ebbole D.J."/>
            <person name="Freitag M."/>
            <person name="Paulsen I."/>
            <person name="Sachs M.S."/>
            <person name="Lander E.S."/>
            <person name="Nusbaum C."/>
            <person name="Birren B.W."/>
        </authorList>
    </citation>
    <scope>NUCLEOTIDE SEQUENCE [LARGE SCALE GENOMIC DNA]</scope>
    <source>
        <strain>ATCC 24698 / 74-OR23-1A / CBS 708.71 / DSM 1257 / FGSC 987</strain>
    </source>
</reference>
<accession>Q7SAQ1</accession>
<feature type="chain" id="PRO_0000193812" description="AP-2 complex subunit sigma">
    <location>
        <begin position="1"/>
        <end position="143"/>
    </location>
</feature>
<proteinExistence type="inferred from homology"/>
<dbReference type="EMBL" id="CM002239">
    <property type="protein sequence ID" value="EAA33423.1"/>
    <property type="molecule type" value="Genomic_DNA"/>
</dbReference>
<dbReference type="RefSeq" id="XP_962659.1">
    <property type="nucleotide sequence ID" value="XM_957566.2"/>
</dbReference>
<dbReference type="SMR" id="Q7SAQ1"/>
<dbReference type="FunCoup" id="Q7SAQ1">
    <property type="interactions" value="461"/>
</dbReference>
<dbReference type="STRING" id="367110.Q7SAQ1"/>
<dbReference type="PaxDb" id="5141-EFNCRP00000008268"/>
<dbReference type="EnsemblFungi" id="EAA33423">
    <property type="protein sequence ID" value="EAA33423"/>
    <property type="gene ID" value="NCU07989"/>
</dbReference>
<dbReference type="GeneID" id="3878798"/>
<dbReference type="KEGG" id="ncr:NCU07989"/>
<dbReference type="VEuPathDB" id="FungiDB:NCU07989"/>
<dbReference type="HOGENOM" id="CLU_061221_3_2_1"/>
<dbReference type="InParanoid" id="Q7SAQ1"/>
<dbReference type="OMA" id="QSNFVEY"/>
<dbReference type="OrthoDB" id="371463at2759"/>
<dbReference type="Proteomes" id="UP000001805">
    <property type="component" value="Chromosome 4, Linkage Group IV"/>
</dbReference>
<dbReference type="GO" id="GO:0030122">
    <property type="term" value="C:AP-2 adaptor complex"/>
    <property type="evidence" value="ECO:0007669"/>
    <property type="project" value="InterPro"/>
</dbReference>
<dbReference type="GO" id="GO:0043231">
    <property type="term" value="C:intracellular membrane-bounded organelle"/>
    <property type="evidence" value="ECO:0000318"/>
    <property type="project" value="GO_Central"/>
</dbReference>
<dbReference type="GO" id="GO:0035615">
    <property type="term" value="F:clathrin adaptor activity"/>
    <property type="evidence" value="ECO:0007669"/>
    <property type="project" value="InterPro"/>
</dbReference>
<dbReference type="GO" id="GO:0072583">
    <property type="term" value="P:clathrin-dependent endocytosis"/>
    <property type="evidence" value="ECO:0007669"/>
    <property type="project" value="InterPro"/>
</dbReference>
<dbReference type="GO" id="GO:0015031">
    <property type="term" value="P:protein transport"/>
    <property type="evidence" value="ECO:0007669"/>
    <property type="project" value="UniProtKB-KW"/>
</dbReference>
<dbReference type="GO" id="GO:0016192">
    <property type="term" value="P:vesicle-mediated transport"/>
    <property type="evidence" value="ECO:0000318"/>
    <property type="project" value="GO_Central"/>
</dbReference>
<dbReference type="CDD" id="cd14833">
    <property type="entry name" value="AP2_sigma"/>
    <property type="match status" value="1"/>
</dbReference>
<dbReference type="FunFam" id="3.30.450.60:FF:000011">
    <property type="entry name" value="AP complex subunit sigma"/>
    <property type="match status" value="1"/>
</dbReference>
<dbReference type="Gene3D" id="3.30.450.60">
    <property type="match status" value="1"/>
</dbReference>
<dbReference type="InterPro" id="IPR016635">
    <property type="entry name" value="AP_complex_ssu"/>
</dbReference>
<dbReference type="InterPro" id="IPR022775">
    <property type="entry name" value="AP_mu_sigma_su"/>
</dbReference>
<dbReference type="InterPro" id="IPR027156">
    <property type="entry name" value="APS2"/>
</dbReference>
<dbReference type="InterPro" id="IPR011012">
    <property type="entry name" value="Longin-like_dom_sf"/>
</dbReference>
<dbReference type="PANTHER" id="PTHR11753">
    <property type="entry name" value="ADAPTOR COMPLEXES SMALL SUBUNIT FAMILY"/>
    <property type="match status" value="1"/>
</dbReference>
<dbReference type="Pfam" id="PF01217">
    <property type="entry name" value="Clat_adaptor_s"/>
    <property type="match status" value="1"/>
</dbReference>
<dbReference type="PIRSF" id="PIRSF015588">
    <property type="entry name" value="AP_complex_sigma"/>
    <property type="match status" value="1"/>
</dbReference>
<dbReference type="SUPFAM" id="SSF64356">
    <property type="entry name" value="SNARE-like"/>
    <property type="match status" value="1"/>
</dbReference>
<organism>
    <name type="scientific">Neurospora crassa (strain ATCC 24698 / 74-OR23-1A / CBS 708.71 / DSM 1257 / FGSC 987)</name>
    <dbReference type="NCBI Taxonomy" id="367110"/>
    <lineage>
        <taxon>Eukaryota</taxon>
        <taxon>Fungi</taxon>
        <taxon>Dikarya</taxon>
        <taxon>Ascomycota</taxon>
        <taxon>Pezizomycotina</taxon>
        <taxon>Sordariomycetes</taxon>
        <taxon>Sordariomycetidae</taxon>
        <taxon>Sordariales</taxon>
        <taxon>Sordariaceae</taxon>
        <taxon>Neurospora</taxon>
    </lineage>
</organism>
<gene>
    <name type="primary">aps-2</name>
    <name type="ORF">NCU07989</name>
</gene>
<comment type="function">
    <text evidence="1">Component of the adaptor complexes which link clathrin to receptors in coated vesicles. Clathrin-associated protein complexes are believed to interact with the cytoplasmic tails of membrane proteins, leading to their selection and concentration (By similarity).</text>
</comment>
<comment type="subunit">
    <text evidence="1">Adaptor protein complex 2 (AP-2) is a heterotetramer composed of two large adaptins (alpha-type subunit APL3 and beta-type subunit APL1), a medium chain (mu-type subunit APM4) and a small adaptin (sigma-type subunit APS2).</text>
</comment>
<comment type="subcellular location">
    <subcellularLocation>
        <location evidence="1">Cell membrane</location>
    </subcellularLocation>
    <subcellularLocation>
        <location evidence="1">Membrane</location>
        <location evidence="1">Coated pit</location>
        <topology evidence="1">Peripheral membrane protein</topology>
        <orientation evidence="1">Cytoplasmic side</orientation>
    </subcellularLocation>
    <text evidence="1">Component of the coat surrounding the cytoplasmic face of the plasma membrane coated vesicles.</text>
</comment>
<comment type="similarity">
    <text evidence="2">Belongs to the adaptor complexes small subunit family.</text>
</comment>
<name>AP2S_NEUCR</name>
<evidence type="ECO:0000250" key="1"/>
<evidence type="ECO:0000305" key="2"/>
<sequence length="143" mass="16955">MLSFILIQNRQGKTRLAKWYVPYSDEEKIKLKGEIHRLVAPRDQKYQSNFVEFRNHKVVYRRYAGLFFCACVDTNDNELAYLEAIHFFVEVLDSFFGNVCELDLVFNFYKVYAILDEVFLAGEIEETSKQVVLTRLEHLDKLE</sequence>